<sequence>MFAEGRIPLWLVATIAGLGVIAVLGLFFYGAYAGLGSSM</sequence>
<dbReference type="EMBL" id="AP009552">
    <property type="protein sequence ID" value="BAG03122.1"/>
    <property type="molecule type" value="Genomic_DNA"/>
</dbReference>
<dbReference type="RefSeq" id="WP_002736108.1">
    <property type="nucleotide sequence ID" value="NC_010296.1"/>
</dbReference>
<dbReference type="SMR" id="B0JLU8"/>
<dbReference type="STRING" id="449447.MAE_33000"/>
<dbReference type="PaxDb" id="449447-MAE_33000"/>
<dbReference type="EnsemblBacteria" id="BAG03122">
    <property type="protein sequence ID" value="BAG03122"/>
    <property type="gene ID" value="MAE_33000"/>
</dbReference>
<dbReference type="KEGG" id="mar:MAE_33000"/>
<dbReference type="eggNOG" id="ENOG5033ABP">
    <property type="taxonomic scope" value="Bacteria"/>
</dbReference>
<dbReference type="HOGENOM" id="CLU_215151_0_0_3"/>
<dbReference type="BioCyc" id="MAER449447:MAE_RS29750-MONOMER"/>
<dbReference type="Proteomes" id="UP000001510">
    <property type="component" value="Chromosome"/>
</dbReference>
<dbReference type="GO" id="GO:0009539">
    <property type="term" value="C:photosystem II reaction center"/>
    <property type="evidence" value="ECO:0007669"/>
    <property type="project" value="InterPro"/>
</dbReference>
<dbReference type="GO" id="GO:0031676">
    <property type="term" value="C:plasma membrane-derived thylakoid membrane"/>
    <property type="evidence" value="ECO:0007669"/>
    <property type="project" value="UniProtKB-SubCell"/>
</dbReference>
<dbReference type="GO" id="GO:0015979">
    <property type="term" value="P:photosynthesis"/>
    <property type="evidence" value="ECO:0007669"/>
    <property type="project" value="UniProtKB-UniRule"/>
</dbReference>
<dbReference type="Gene3D" id="6.10.250.2070">
    <property type="match status" value="1"/>
</dbReference>
<dbReference type="HAMAP" id="MF_01305">
    <property type="entry name" value="PSII_PsbJ"/>
    <property type="match status" value="1"/>
</dbReference>
<dbReference type="InterPro" id="IPR002682">
    <property type="entry name" value="PSII_PsbJ"/>
</dbReference>
<dbReference type="InterPro" id="IPR037267">
    <property type="entry name" value="PSII_PsbJ_sf"/>
</dbReference>
<dbReference type="NCBIfam" id="NF002722">
    <property type="entry name" value="PRK02565.1"/>
    <property type="match status" value="1"/>
</dbReference>
<dbReference type="PANTHER" id="PTHR34812">
    <property type="entry name" value="PHOTOSYSTEM II REACTION CENTER PROTEIN J"/>
    <property type="match status" value="1"/>
</dbReference>
<dbReference type="PANTHER" id="PTHR34812:SF3">
    <property type="entry name" value="PHOTOSYSTEM II REACTION CENTER PROTEIN J"/>
    <property type="match status" value="1"/>
</dbReference>
<dbReference type="Pfam" id="PF01788">
    <property type="entry name" value="PsbJ"/>
    <property type="match status" value="1"/>
</dbReference>
<dbReference type="SUPFAM" id="SSF161021">
    <property type="entry name" value="Photosystem II reaction center protein J, PsbJ"/>
    <property type="match status" value="1"/>
</dbReference>
<proteinExistence type="inferred from homology"/>
<reference key="1">
    <citation type="journal article" date="2007" name="DNA Res.">
        <title>Complete genomic structure of the bloom-forming toxic cyanobacterium Microcystis aeruginosa NIES-843.</title>
        <authorList>
            <person name="Kaneko T."/>
            <person name="Nakajima N."/>
            <person name="Okamoto S."/>
            <person name="Suzuki I."/>
            <person name="Tanabe Y."/>
            <person name="Tamaoki M."/>
            <person name="Nakamura Y."/>
            <person name="Kasai F."/>
            <person name="Watanabe A."/>
            <person name="Kawashima K."/>
            <person name="Kishida Y."/>
            <person name="Ono A."/>
            <person name="Shimizu Y."/>
            <person name="Takahashi C."/>
            <person name="Minami C."/>
            <person name="Fujishiro T."/>
            <person name="Kohara M."/>
            <person name="Katoh M."/>
            <person name="Nakazaki N."/>
            <person name="Nakayama S."/>
            <person name="Yamada M."/>
            <person name="Tabata S."/>
            <person name="Watanabe M.M."/>
        </authorList>
    </citation>
    <scope>NUCLEOTIDE SEQUENCE [LARGE SCALE GENOMIC DNA]</scope>
    <source>
        <strain>NIES-843 / IAM M-247</strain>
    </source>
</reference>
<protein>
    <recommendedName>
        <fullName evidence="1">Photosystem II reaction center protein J</fullName>
        <shortName evidence="1">PSII-J</shortName>
    </recommendedName>
</protein>
<organism>
    <name type="scientific">Microcystis aeruginosa (strain NIES-843 / IAM M-2473)</name>
    <dbReference type="NCBI Taxonomy" id="449447"/>
    <lineage>
        <taxon>Bacteria</taxon>
        <taxon>Bacillati</taxon>
        <taxon>Cyanobacteriota</taxon>
        <taxon>Cyanophyceae</taxon>
        <taxon>Oscillatoriophycideae</taxon>
        <taxon>Chroococcales</taxon>
        <taxon>Microcystaceae</taxon>
        <taxon>Microcystis</taxon>
    </lineage>
</organism>
<evidence type="ECO:0000255" key="1">
    <source>
        <dbReference type="HAMAP-Rule" id="MF_01305"/>
    </source>
</evidence>
<accession>B0JLU8</accession>
<name>PSBJ_MICAN</name>
<comment type="function">
    <text evidence="1">One of the components of the core complex of photosystem II (PSII). PSII is a light-driven water:plastoquinone oxidoreductase that uses light energy to abstract electrons from H(2)O, generating O(2) and a proton gradient subsequently used for ATP formation. It consists of a core antenna complex that captures photons, and an electron transfer chain that converts photonic excitation into a charge separation.</text>
</comment>
<comment type="subunit">
    <text evidence="1">PSII is composed of 1 copy each of membrane proteins PsbA, PsbB, PsbC, PsbD, PsbE, PsbF, PsbH, PsbI, PsbJ, PsbK, PsbL, PsbM, PsbT, PsbX, PsbY, PsbZ, Psb30/Ycf12, peripheral proteins PsbO, CyanoQ (PsbQ), PsbU, PsbV and a large number of cofactors. It forms dimeric complexes.</text>
</comment>
<comment type="subcellular location">
    <subcellularLocation>
        <location evidence="1">Cellular thylakoid membrane</location>
        <topology evidence="1">Single-pass membrane protein</topology>
    </subcellularLocation>
</comment>
<comment type="similarity">
    <text evidence="1">Belongs to the PsbJ family.</text>
</comment>
<feature type="chain" id="PRO_1000140665" description="Photosystem II reaction center protein J">
    <location>
        <begin position="1"/>
        <end position="39"/>
    </location>
</feature>
<feature type="transmembrane region" description="Helical" evidence="1">
    <location>
        <begin position="7"/>
        <end position="27"/>
    </location>
</feature>
<keyword id="KW-0472">Membrane</keyword>
<keyword id="KW-0602">Photosynthesis</keyword>
<keyword id="KW-0604">Photosystem II</keyword>
<keyword id="KW-0674">Reaction center</keyword>
<keyword id="KW-0793">Thylakoid</keyword>
<keyword id="KW-0812">Transmembrane</keyword>
<keyword id="KW-1133">Transmembrane helix</keyword>
<gene>
    <name evidence="1" type="primary">psbJ</name>
    <name type="ordered locus">MAE_33000</name>
</gene>